<sequence length="331" mass="35682">MKKSLIALTLAALPVAAMADVTLYGTIKAGVETSRSVFHQNGQVTEVTTATGIVDLGSKIGFKGQEDLGNGLKAIWQVEQKASIAGTDSGWGNRQSFIGLKGGFGKLRVGRLNSVLKDTGDINPWDSKSDYLGVNKIAEPEARLISVRYDSPEFAGLSGSVQYALNDNAGRHNSESYHAGFNYKNGGFFVQYGGAYKRHHQVQEGLNIEKYQIHRLVSGYDNDALYASVAVQQQDAKLTDASNSHNSQTEVAATLAYRFGNVTPRVSYAHGFKGLVDDADIGNEYDQVVVGAEYDFSKRTSALVSAGWLQEGKGENKFVATAGGVGLRHKF</sequence>
<accession>E6MZM0</accession>
<keyword id="KW-0998">Cell outer membrane</keyword>
<keyword id="KW-0903">Direct protein sequencing</keyword>
<keyword id="KW-0406">Ion transport</keyword>
<keyword id="KW-0472">Membrane</keyword>
<keyword id="KW-0626">Porin</keyword>
<keyword id="KW-0732">Signal</keyword>
<keyword id="KW-0812">Transmembrane</keyword>
<keyword id="KW-1134">Transmembrane beta strand</keyword>
<keyword id="KW-0813">Transport</keyword>
<proteinExistence type="evidence at protein level"/>
<feature type="signal peptide" evidence="2">
    <location>
        <begin position="1"/>
        <end position="19"/>
    </location>
</feature>
<feature type="chain" id="PRO_0000411119" description="Major outer membrane protein P.IB">
    <location>
        <begin position="20"/>
        <end position="331"/>
    </location>
</feature>
<dbReference type="EMBL" id="AEQZ01000043">
    <property type="protein sequence ID" value="EFV62899.1"/>
    <property type="molecule type" value="Genomic_DNA"/>
</dbReference>
<dbReference type="EMBL" id="CP002420">
    <property type="protein sequence ID" value="ADY96541.1"/>
    <property type="molecule type" value="Genomic_DNA"/>
</dbReference>
<dbReference type="RefSeq" id="WP_002244345.1">
    <property type="nucleotide sequence ID" value="NZ_AEQZ01000043.1"/>
</dbReference>
<dbReference type="SMR" id="E6MZM0"/>
<dbReference type="KEGG" id="nmh:NMBH4476_1982"/>
<dbReference type="PATRIC" id="fig|909420.3.peg.2663"/>
<dbReference type="HOGENOM" id="CLU_038238_4_0_4"/>
<dbReference type="Proteomes" id="UP000032707">
    <property type="component" value="Unassembled WGS sequence"/>
</dbReference>
<dbReference type="GO" id="GO:0009279">
    <property type="term" value="C:cell outer membrane"/>
    <property type="evidence" value="ECO:0007669"/>
    <property type="project" value="UniProtKB-SubCell"/>
</dbReference>
<dbReference type="GO" id="GO:0046930">
    <property type="term" value="C:pore complex"/>
    <property type="evidence" value="ECO:0007669"/>
    <property type="project" value="UniProtKB-KW"/>
</dbReference>
<dbReference type="GO" id="GO:0015288">
    <property type="term" value="F:porin activity"/>
    <property type="evidence" value="ECO:0007669"/>
    <property type="project" value="UniProtKB-KW"/>
</dbReference>
<dbReference type="GO" id="GO:0034220">
    <property type="term" value="P:monoatomic ion transmembrane transport"/>
    <property type="evidence" value="ECO:0007669"/>
    <property type="project" value="InterPro"/>
</dbReference>
<dbReference type="CDD" id="cd00342">
    <property type="entry name" value="gram_neg_porins"/>
    <property type="match status" value="1"/>
</dbReference>
<dbReference type="Gene3D" id="2.40.160.10">
    <property type="entry name" value="Porin"/>
    <property type="match status" value="1"/>
</dbReference>
<dbReference type="InterPro" id="IPR050298">
    <property type="entry name" value="Gram-neg_bact_OMP"/>
</dbReference>
<dbReference type="InterPro" id="IPR033900">
    <property type="entry name" value="Gram_neg_porin_domain"/>
</dbReference>
<dbReference type="InterPro" id="IPR023614">
    <property type="entry name" value="Porin_dom_sf"/>
</dbReference>
<dbReference type="InterPro" id="IPR001702">
    <property type="entry name" value="Porin_Gram-ve"/>
</dbReference>
<dbReference type="InterPro" id="IPR013793">
    <property type="entry name" value="Porin_Gram-ve_CS"/>
</dbReference>
<dbReference type="InterPro" id="IPR002299">
    <property type="entry name" value="Porin_Neis"/>
</dbReference>
<dbReference type="NCBIfam" id="NF040479">
    <property type="entry name" value="porin_porB_Neis"/>
    <property type="match status" value="1"/>
</dbReference>
<dbReference type="PANTHER" id="PTHR34501:SF9">
    <property type="entry name" value="MAJOR OUTER MEMBRANE PROTEIN P.IA"/>
    <property type="match status" value="1"/>
</dbReference>
<dbReference type="PANTHER" id="PTHR34501">
    <property type="entry name" value="PROTEIN YDDL-RELATED"/>
    <property type="match status" value="1"/>
</dbReference>
<dbReference type="Pfam" id="PF00267">
    <property type="entry name" value="Porin_1"/>
    <property type="match status" value="1"/>
</dbReference>
<dbReference type="PRINTS" id="PR00182">
    <property type="entry name" value="ECOLNEIPORIN"/>
</dbReference>
<dbReference type="PRINTS" id="PR00184">
    <property type="entry name" value="NEISSPPORIN"/>
</dbReference>
<dbReference type="SUPFAM" id="SSF56935">
    <property type="entry name" value="Porins"/>
    <property type="match status" value="1"/>
</dbReference>
<dbReference type="PROSITE" id="PS00576">
    <property type="entry name" value="GRAM_NEG_PORIN"/>
    <property type="match status" value="1"/>
</dbReference>
<organism>
    <name type="scientific">Neisseria meningitidis serogroup B / serotype 15 (strain H44/76)</name>
    <dbReference type="NCBI Taxonomy" id="909420"/>
    <lineage>
        <taxon>Bacteria</taxon>
        <taxon>Pseudomonadati</taxon>
        <taxon>Pseudomonadota</taxon>
        <taxon>Betaproteobacteria</taxon>
        <taxon>Neisseriales</taxon>
        <taxon>Neisseriaceae</taxon>
        <taxon>Neisseria</taxon>
    </lineage>
</organism>
<protein>
    <recommendedName>
        <fullName>Major outer membrane protein P.IB</fullName>
        <shortName>PIB</shortName>
        <shortName>Protein IB</shortName>
    </recommendedName>
    <alternativeName>
        <fullName>Class 3 protein</fullName>
    </alternativeName>
    <alternativeName>
        <fullName>Porin</fullName>
    </alternativeName>
</protein>
<name>OMPB_NEIMH</name>
<reference key="1">
    <citation type="submission" date="2010-12" db="EMBL/GenBank/DDBJ databases">
        <title>Genome Sequence of Neisseria meningitidis serogroup B strain H44/76.</title>
        <authorList>
            <person name="Piet J.R."/>
            <person name="Huis in 't Veld R."/>
            <person name="van Schaik B."/>
            <person name="van Kampen A."/>
            <person name="Baas F."/>
            <person name="van de Beek D."/>
            <person name="Pannekoek Y."/>
            <person name="van der Ende A."/>
        </authorList>
    </citation>
    <scope>NUCLEOTIDE SEQUENCE [LARGE SCALE GENOMIC DNA]</scope>
    <source>
        <strain>H44/76</strain>
    </source>
</reference>
<reference key="2">
    <citation type="journal article" date="2011" name="Proc. Natl. Acad. Sci. U.S.A.">
        <title>Neisseria meningitidis is structured in clades associated with restriction modification systems that modulate homologous recombination.</title>
        <authorList>
            <person name="Budroni S."/>
            <person name="Siena E."/>
            <person name="Hotopp J.C."/>
            <person name="Seib K.L."/>
            <person name="Serruto D."/>
            <person name="Nofroni C."/>
            <person name="Comanducci M."/>
            <person name="Riley D.R."/>
            <person name="Daugherty S.C."/>
            <person name="Angiuoli S.V."/>
            <person name="Covacci A."/>
            <person name="Pizza M."/>
            <person name="Rappuoli R."/>
            <person name="Moxon E.R."/>
            <person name="Tettelin H."/>
            <person name="Medini D."/>
        </authorList>
    </citation>
    <scope>NUCLEOTIDE SEQUENCE [LARGE SCALE GENOMIC DNA]</scope>
    <source>
        <strain>H44/76</strain>
    </source>
</reference>
<reference key="3">
    <citation type="journal article" date="1989" name="Infect. Immun.">
        <title>Purification, cyanogen bromide cleavage, and amino terminus sequencing of class 1 and class 3 outer membrane proteins of meningococci.</title>
        <authorList>
            <person name="Poolman J.T."/>
            <person name="Timmermans H.A."/>
            <person name="Teerlink T."/>
            <person name="Seid R.C. Jr."/>
        </authorList>
    </citation>
    <scope>PROTEIN SEQUENCE OF 20-38</scope>
    <source>
        <strain>H44/76</strain>
    </source>
</reference>
<gene>
    <name type="primary">porB</name>
    <name type="ordered locus">NMBH4476_1982</name>
    <name type="ORF">NMH_2035</name>
</gene>
<comment type="function">
    <text evidence="1">Serves as a slightly cation selective porin.</text>
</comment>
<comment type="subunit">
    <text evidence="1">Homotrimer.</text>
</comment>
<comment type="subcellular location">
    <subcellularLocation>
        <location evidence="1">Cell outer membrane</location>
        <topology evidence="1">Multi-pass membrane protein</topology>
    </subcellularLocation>
</comment>
<comment type="similarity">
    <text evidence="3">Belongs to the Gram-negative porin family.</text>
</comment>
<evidence type="ECO:0000250" key="1"/>
<evidence type="ECO:0000255" key="2"/>
<evidence type="ECO:0000305" key="3"/>